<feature type="chain" id="PRO_0000234340" description="Striated muscle preferentially expressed protein kinase">
    <location>
        <begin position="1"/>
        <end position="2995"/>
    </location>
</feature>
<feature type="domain" description="Ig-like 1">
    <location>
        <begin position="27"/>
        <end position="109"/>
    </location>
</feature>
<feature type="domain" description="Ig-like 2">
    <location>
        <begin position="613"/>
        <end position="701"/>
    </location>
</feature>
<feature type="domain" description="Ig-like 3">
    <location>
        <begin position="714"/>
        <end position="802"/>
    </location>
</feature>
<feature type="domain" description="Ig-like 4">
    <location>
        <begin position="840"/>
        <end position="930"/>
    </location>
</feature>
<feature type="domain" description="Fibronectin type-III 1" evidence="4">
    <location>
        <begin position="937"/>
        <end position="1035"/>
    </location>
</feature>
<feature type="domain" description="Ig-like 5">
    <location>
        <begin position="1135"/>
        <end position="1224"/>
    </location>
</feature>
<feature type="domain" description="Protein kinase 1" evidence="3">
    <location>
        <begin position="1255"/>
        <end position="1505"/>
    </location>
</feature>
<feature type="domain" description="Ig-like 6">
    <location>
        <begin position="2323"/>
        <end position="2413"/>
    </location>
</feature>
<feature type="domain" description="Fibronectin type-III 2" evidence="4">
    <location>
        <begin position="2420"/>
        <end position="2513"/>
    </location>
</feature>
<feature type="domain" description="Protein kinase 2" evidence="3">
    <location>
        <begin position="2682"/>
        <end position="2934"/>
    </location>
</feature>
<feature type="region of interest" description="Disordered" evidence="5">
    <location>
        <begin position="250"/>
        <end position="272"/>
    </location>
</feature>
<feature type="region of interest" description="Disordered" evidence="5">
    <location>
        <begin position="384"/>
        <end position="467"/>
    </location>
</feature>
<feature type="region of interest" description="Disordered" evidence="5">
    <location>
        <begin position="815"/>
        <end position="834"/>
    </location>
</feature>
<feature type="region of interest" description="Disordered" evidence="5">
    <location>
        <begin position="1559"/>
        <end position="1582"/>
    </location>
</feature>
<feature type="region of interest" description="Disordered" evidence="5">
    <location>
        <begin position="1776"/>
        <end position="1839"/>
    </location>
</feature>
<feature type="region of interest" description="Disordered" evidence="5">
    <location>
        <begin position="2017"/>
        <end position="2058"/>
    </location>
</feature>
<feature type="region of interest" description="Disordered" evidence="5">
    <location>
        <begin position="2163"/>
        <end position="2189"/>
    </location>
</feature>
<feature type="region of interest" description="Disordered" evidence="5">
    <location>
        <begin position="2211"/>
        <end position="2254"/>
    </location>
</feature>
<feature type="region of interest" description="Disordered" evidence="5">
    <location>
        <begin position="2268"/>
        <end position="2322"/>
    </location>
</feature>
<feature type="region of interest" description="Disordered" evidence="5">
    <location>
        <begin position="2574"/>
        <end position="2609"/>
    </location>
</feature>
<feature type="region of interest" description="Disordered" evidence="5">
    <location>
        <begin position="2648"/>
        <end position="2676"/>
    </location>
</feature>
<feature type="compositionally biased region" description="Polar residues" evidence="5">
    <location>
        <begin position="384"/>
        <end position="404"/>
    </location>
</feature>
<feature type="compositionally biased region" description="Low complexity" evidence="5">
    <location>
        <begin position="454"/>
        <end position="464"/>
    </location>
</feature>
<feature type="compositionally biased region" description="Polar residues" evidence="5">
    <location>
        <begin position="1786"/>
        <end position="1795"/>
    </location>
</feature>
<feature type="compositionally biased region" description="Low complexity" evidence="5">
    <location>
        <begin position="2274"/>
        <end position="2284"/>
    </location>
</feature>
<feature type="compositionally biased region" description="Basic and acidic residues" evidence="5">
    <location>
        <begin position="2289"/>
        <end position="2299"/>
    </location>
</feature>
<feature type="compositionally biased region" description="Polar residues" evidence="5">
    <location>
        <begin position="2587"/>
        <end position="2605"/>
    </location>
</feature>
<feature type="compositionally biased region" description="Polar residues" evidence="5">
    <location>
        <begin position="2652"/>
        <end position="2674"/>
    </location>
</feature>
<feature type="active site" description="Proton acceptor" evidence="1">
    <location>
        <position position="1372"/>
    </location>
</feature>
<feature type="active site" description="Proton acceptor" evidence="1">
    <location>
        <position position="2801"/>
    </location>
</feature>
<feature type="binding site" evidence="3">
    <location>
        <begin position="1261"/>
        <end position="1269"/>
    </location>
    <ligand>
        <name>ATP</name>
        <dbReference type="ChEBI" id="CHEBI:30616"/>
    </ligand>
</feature>
<feature type="binding site" evidence="3">
    <location>
        <position position="1283"/>
    </location>
    <ligand>
        <name>ATP</name>
        <dbReference type="ChEBI" id="CHEBI:30616"/>
    </ligand>
</feature>
<feature type="binding site" evidence="3">
    <location>
        <begin position="2688"/>
        <end position="2696"/>
    </location>
    <ligand>
        <name>ATP</name>
        <dbReference type="ChEBI" id="CHEBI:30616"/>
    </ligand>
</feature>
<feature type="binding site" evidence="3">
    <location>
        <position position="2711"/>
    </location>
    <ligand>
        <name>ATP</name>
        <dbReference type="ChEBI" id="CHEBI:30616"/>
    </ligand>
</feature>
<feature type="disulfide bond" evidence="2">
    <location>
        <begin position="50"/>
        <end position="93"/>
    </location>
</feature>
<feature type="disulfide bond" evidence="2">
    <location>
        <begin position="639"/>
        <end position="691"/>
    </location>
</feature>
<feature type="disulfide bond" evidence="2">
    <location>
        <begin position="861"/>
        <end position="912"/>
    </location>
</feature>
<feature type="disulfide bond" evidence="2">
    <location>
        <begin position="2345"/>
        <end position="2397"/>
    </location>
</feature>
<accession>Q696W0</accession>
<dbReference type="EC" id="2.7.11.1"/>
<dbReference type="EMBL" id="AY578914">
    <property type="protein sequence ID" value="AAT80902.1"/>
    <property type="molecule type" value="mRNA"/>
</dbReference>
<dbReference type="RefSeq" id="NP_001007110.1">
    <property type="nucleotide sequence ID" value="NM_001007109.1"/>
</dbReference>
<dbReference type="SMR" id="Q696W0"/>
<dbReference type="FunCoup" id="Q696W0">
    <property type="interactions" value="11"/>
</dbReference>
<dbReference type="STRING" id="7955.ENSDARP00000139505"/>
<dbReference type="PaxDb" id="7955-ENSDARP00000032236"/>
<dbReference type="GeneID" id="570504"/>
<dbReference type="KEGG" id="dre:570504"/>
<dbReference type="AGR" id="ZFIN:ZDB-GENE-030131-3230"/>
<dbReference type="CTD" id="570504"/>
<dbReference type="ZFIN" id="ZDB-GENE-030131-3230">
    <property type="gene designation" value="spega"/>
</dbReference>
<dbReference type="eggNOG" id="KOG0613">
    <property type="taxonomic scope" value="Eukaryota"/>
</dbReference>
<dbReference type="eggNOG" id="KOG4475">
    <property type="taxonomic scope" value="Eukaryota"/>
</dbReference>
<dbReference type="InParanoid" id="Q696W0"/>
<dbReference type="OrthoDB" id="2570713at2759"/>
<dbReference type="PhylomeDB" id="Q696W0"/>
<dbReference type="PRO" id="PR:Q696W0"/>
<dbReference type="Proteomes" id="UP000000437">
    <property type="component" value="Alternate scaffold 6"/>
</dbReference>
<dbReference type="Proteomes" id="UP000000437">
    <property type="component" value="Chromosome 6"/>
</dbReference>
<dbReference type="GO" id="GO:0005634">
    <property type="term" value="C:nucleus"/>
    <property type="evidence" value="ECO:0007669"/>
    <property type="project" value="UniProtKB-SubCell"/>
</dbReference>
<dbReference type="GO" id="GO:0030018">
    <property type="term" value="C:Z disc"/>
    <property type="evidence" value="ECO:0000303"/>
    <property type="project" value="ZFIN"/>
</dbReference>
<dbReference type="GO" id="GO:0005524">
    <property type="term" value="F:ATP binding"/>
    <property type="evidence" value="ECO:0007669"/>
    <property type="project" value="UniProtKB-KW"/>
</dbReference>
<dbReference type="GO" id="GO:0004672">
    <property type="term" value="F:protein kinase activity"/>
    <property type="evidence" value="ECO:0000250"/>
    <property type="project" value="ZFIN"/>
</dbReference>
<dbReference type="GO" id="GO:0106310">
    <property type="term" value="F:protein serine kinase activity"/>
    <property type="evidence" value="ECO:0007669"/>
    <property type="project" value="RHEA"/>
</dbReference>
<dbReference type="GO" id="GO:0004674">
    <property type="term" value="F:protein serine/threonine kinase activity"/>
    <property type="evidence" value="ECO:0007669"/>
    <property type="project" value="UniProtKB-KW"/>
</dbReference>
<dbReference type="GO" id="GO:0007517">
    <property type="term" value="P:muscle organ development"/>
    <property type="evidence" value="ECO:0000250"/>
    <property type="project" value="ZFIN"/>
</dbReference>
<dbReference type="CDD" id="cd00063">
    <property type="entry name" value="FN3"/>
    <property type="match status" value="2"/>
</dbReference>
<dbReference type="CDD" id="cd14111">
    <property type="entry name" value="STKc_SPEG_rpt2"/>
    <property type="match status" value="1"/>
</dbReference>
<dbReference type="FunFam" id="2.60.40.10:FF:000080">
    <property type="entry name" value="Myosin light chain kinase, smooth muscle"/>
    <property type="match status" value="1"/>
</dbReference>
<dbReference type="FunFam" id="2.60.40.10:FF:000032">
    <property type="entry name" value="palladin isoform X1"/>
    <property type="match status" value="2"/>
</dbReference>
<dbReference type="FunFam" id="1.10.510.10:FF:000363">
    <property type="entry name" value="Striated muscle preferentially expressed protein kinase"/>
    <property type="match status" value="1"/>
</dbReference>
<dbReference type="FunFam" id="2.60.40.10:FF:000497">
    <property type="entry name" value="Striated muscle preferentially expressed protein kinase"/>
    <property type="match status" value="1"/>
</dbReference>
<dbReference type="FunFam" id="2.60.40.10:FF:000428">
    <property type="entry name" value="striated muscle preferentially expressed protein kinase"/>
    <property type="match status" value="1"/>
</dbReference>
<dbReference type="FunFam" id="2.60.40.10:FF:000513">
    <property type="entry name" value="striated muscle preferentially expressed protein kinase"/>
    <property type="match status" value="1"/>
</dbReference>
<dbReference type="FunFam" id="2.60.40.10:FF:000541">
    <property type="entry name" value="striated muscle preferentially expressed protein kinase"/>
    <property type="match status" value="1"/>
</dbReference>
<dbReference type="FunFam" id="3.30.200.20:FF:000302">
    <property type="entry name" value="striated muscle preferentially expressed protein kinase"/>
    <property type="match status" value="1"/>
</dbReference>
<dbReference type="FunFam" id="1.10.510.10:FF:000344">
    <property type="entry name" value="striated muscle preferentially expressed protein kinase isoform X1"/>
    <property type="match status" value="1"/>
</dbReference>
<dbReference type="FunFam" id="2.60.40.10:FF:003131">
    <property type="entry name" value="Striated muscle-enriched protein kinase a"/>
    <property type="match status" value="1"/>
</dbReference>
<dbReference type="Gene3D" id="2.60.40.10">
    <property type="entry name" value="Immunoglobulins"/>
    <property type="match status" value="9"/>
</dbReference>
<dbReference type="Gene3D" id="3.30.200.20">
    <property type="entry name" value="Phosphorylase Kinase, domain 1"/>
    <property type="match status" value="2"/>
</dbReference>
<dbReference type="Gene3D" id="1.10.510.10">
    <property type="entry name" value="Transferase(Phosphotransferase) domain 1"/>
    <property type="match status" value="2"/>
</dbReference>
<dbReference type="InterPro" id="IPR003961">
    <property type="entry name" value="FN3_dom"/>
</dbReference>
<dbReference type="InterPro" id="IPR036116">
    <property type="entry name" value="FN3_sf"/>
</dbReference>
<dbReference type="InterPro" id="IPR007110">
    <property type="entry name" value="Ig-like_dom"/>
</dbReference>
<dbReference type="InterPro" id="IPR036179">
    <property type="entry name" value="Ig-like_dom_sf"/>
</dbReference>
<dbReference type="InterPro" id="IPR013783">
    <property type="entry name" value="Ig-like_fold"/>
</dbReference>
<dbReference type="InterPro" id="IPR013098">
    <property type="entry name" value="Ig_I-set"/>
</dbReference>
<dbReference type="InterPro" id="IPR003599">
    <property type="entry name" value="Ig_sub"/>
</dbReference>
<dbReference type="InterPro" id="IPR003598">
    <property type="entry name" value="Ig_sub2"/>
</dbReference>
<dbReference type="InterPro" id="IPR011009">
    <property type="entry name" value="Kinase-like_dom_sf"/>
</dbReference>
<dbReference type="InterPro" id="IPR000719">
    <property type="entry name" value="Prot_kinase_dom"/>
</dbReference>
<dbReference type="InterPro" id="IPR017441">
    <property type="entry name" value="Protein_kinase_ATP_BS"/>
</dbReference>
<dbReference type="InterPro" id="IPR008271">
    <property type="entry name" value="Ser/Thr_kinase_AS"/>
</dbReference>
<dbReference type="PANTHER" id="PTHR47633">
    <property type="entry name" value="IMMUNOGLOBULIN"/>
    <property type="match status" value="1"/>
</dbReference>
<dbReference type="PANTHER" id="PTHR47633:SF3">
    <property type="entry name" value="STRIATED MUSCLE PREFERENTIALLY EXPRESSED PROTEIN KINASE"/>
    <property type="match status" value="1"/>
</dbReference>
<dbReference type="Pfam" id="PF00041">
    <property type="entry name" value="fn3"/>
    <property type="match status" value="1"/>
</dbReference>
<dbReference type="Pfam" id="PF07679">
    <property type="entry name" value="I-set"/>
    <property type="match status" value="6"/>
</dbReference>
<dbReference type="Pfam" id="PF00069">
    <property type="entry name" value="Pkinase"/>
    <property type="match status" value="2"/>
</dbReference>
<dbReference type="SMART" id="SM00060">
    <property type="entry name" value="FN3"/>
    <property type="match status" value="2"/>
</dbReference>
<dbReference type="SMART" id="SM00409">
    <property type="entry name" value="IG"/>
    <property type="match status" value="7"/>
</dbReference>
<dbReference type="SMART" id="SM00408">
    <property type="entry name" value="IGc2"/>
    <property type="match status" value="6"/>
</dbReference>
<dbReference type="SMART" id="SM00220">
    <property type="entry name" value="S_TKc"/>
    <property type="match status" value="2"/>
</dbReference>
<dbReference type="SUPFAM" id="SSF49265">
    <property type="entry name" value="Fibronectin type III"/>
    <property type="match status" value="2"/>
</dbReference>
<dbReference type="SUPFAM" id="SSF48726">
    <property type="entry name" value="Immunoglobulin"/>
    <property type="match status" value="7"/>
</dbReference>
<dbReference type="SUPFAM" id="SSF56112">
    <property type="entry name" value="Protein kinase-like (PK-like)"/>
    <property type="match status" value="2"/>
</dbReference>
<dbReference type="PROSITE" id="PS50853">
    <property type="entry name" value="FN3"/>
    <property type="match status" value="2"/>
</dbReference>
<dbReference type="PROSITE" id="PS50835">
    <property type="entry name" value="IG_LIKE"/>
    <property type="match status" value="6"/>
</dbReference>
<dbReference type="PROSITE" id="PS00107">
    <property type="entry name" value="PROTEIN_KINASE_ATP"/>
    <property type="match status" value="1"/>
</dbReference>
<dbReference type="PROSITE" id="PS50011">
    <property type="entry name" value="PROTEIN_KINASE_DOM"/>
    <property type="match status" value="2"/>
</dbReference>
<dbReference type="PROSITE" id="PS00108">
    <property type="entry name" value="PROTEIN_KINASE_ST"/>
    <property type="match status" value="2"/>
</dbReference>
<name>SPEG_DANRE</name>
<protein>
    <recommendedName>
        <fullName>Striated muscle preferentially expressed protein kinase</fullName>
        <ecNumber>2.7.11.1</ecNumber>
    </recommendedName>
</protein>
<gene>
    <name type="primary">speg</name>
    <name type="synonym">apeg1</name>
</gene>
<sequence>MRKVTEEKRHSSSMNSSTVETSFIAAPPVFLRKLKWAAVAAGCDVRLRVCVGGNPRPTLHWYHNDDPLVIDHEDYDGLWIRDCQQADGGLYTCVAVNHLGEARTSAVLAVLDLEEDSNSTEDESAEPHVSMEMKEQFMPPQGEAINSQPTGRGRAMLSHIPSDGLVVEREMRALGSRAPGLQEPLSPGRGQLDFKTSEATPFVQTQPPHKAQASITKSDVDATIDSTATKIKGTKTAMNGAEVSIKSSKITGSHQSGGLQDPSSIQTPKVSQASSKILDRVRAFEEQSHNSNMPKVSSRLSWGFNRTSSCNSEDETCKAGKFQANTKSDVALKRSFFKQKASSLEEQSTYVQKNFQSKLSEELHRIKKLVGKSNIKKAFSMEQLTQTDKQSSVSTESVPTQVIQKSEETGKHFTNLKAVPDAKERWTTLPKEQSSRLPKINLADKTKQPENETPPEMNENQENNSKPTQLLDGQVLNEKVSFIPGQCSPMLPRTNVSRKWPKSPAQPMVKDGLVQAPQKPPRLLESISTPPTPFKMTIPTIVVENKPVDEELDQKEGQIMRQNRDALDDFHTSVEKSIAEAPMSELPRKDALGTAGSELLQCIIKENTVARAPAESLLIITRPMQDVKVKAGETALLECFIAGSQAVDVDWLANGKLIQPALFDCKMQFDGHRCRLLFKSAHENDSGCYTCKLSTAKEELICTANLLVIPSKEPLFTRKLEVLEAIEGRSAQFDCKVSGCPPPEVTWTHCEKPLVESDNIHILNVNGHHSLLITHVNKESEGLYTAIAQNVHGKAASSAELYVQEPRPAISTHMSRLEKMPSIPEEPEVPEGEVERRTMPDFIKPLSDLEVIEGKEAVLKCRVTGLPYPKITWYHNGKKIESTNDRKMTQYRDVHSLVIQSVCHDHSGVYKCVISNKVGKAACYAHLYVAVSLPEPPDGPPVIESVTGRMILLSWKKPKNLDPSIDPASLMYVVQQQVLGSTQWTTIASSLTDTSYTVTSLSKGVCYSFRVLSTTGKTLSKPSQPTDLVQLVDRGEYFRKAPVIIDKPDIVYAVENQPVTITITINHVQATCTWKRRGVVLVNKLGALEMTTPDDDQHALHIAKVKSTDVGQLIFMANNQYGSDLGTLQLVIAVPPIFETIMEDLDVCVGETCHFAVVVDGKPDPDILWYKDGVLLAESSHLTFVYDDRECSLVVLNAQPEDVGVYTCTAKNLAGSVSCKAELTVHTAQNVEEEEEQMEDEATILRRMRMLTDYYDIHKEIGRGAFSYVKRVKHKNDQSFAAKFISVRAKKKTCALRELALLAELDHKSIVRFHDAFEKRRVVIILTELCHEELLERITKRTTILESEVQSIIRQLLEGIEYLHQNDIIHLDLKPENILMADQKTDQIRICDFGNALKVKPNEELYCKYGIPEFIAPEIVNQSPISKSTDIWPVGVITYLCLTGVSPFAGENDRDTLLNIRNYNVAFEESMFKDLCREAKGFIIKVLVSNKLRPDATECLLHPWFKSLTKGKSINTTLHKQVLARRKWQCSLIRYGSKMVMRSISELLDDSSSHVSLAVPRNLKDGSPPPSSSSDSDEDIDELPFIPMPHTMMFSGSRMSLTEIHEVDDKVIRGSNESYKKNLNQLDDIPESQIIAGQKNEDYLKNPKRTDNCLQRGSSVEVDQVASKTRRGLMRRGSSADSALLLQITPEDNEIKDTTEDSQKHMKKAVSMELPHRSSSPKTAKLSKEDYALKLDLMRQRLLKGGTVNKNMSGLRGPLLETLGVDDERRTSSLDRNFRNARLNASGDSGTFNNDSSEETYQKPAFRKRSSLRDENSESISLHRRSGAPLEIPSSSTGDHNVLKIKSTILDENKANLPPLFPRDISSKPPTPVLENKQVSKEEANSDVLIMNSSRSAFNLEDTEIKVEEMKEQDSVPENMNKSTEFPLDILPHDISSNYCSKLQANGKKASFLTPLPTPVLKISQPNIQPTAGRPGVFASAFSAHQPNLRSDIKNIDSEEIFEARFKKRESSLAHGLKRLTRTKSEESSPVPQRKSDEVVYRPGPVGSPLEFGSTGLKEKSKSVQDLREVDKEVGLGLIGRFSMRARKLQPIDKKEKKEISDSVTNKRQLTWATRRSKSLDKKENFETNKENLEKDTKKIAESPVLAVRRKFESNVSGIFDRVHSRSKDRKDKETKPHIDAEAPNVEKQDMKKINDSPVLALRKKFETKVSGISYRKQSQSEGEGTKFEGQKTPLFSRHHRSQSDGLIHKKMDIPENQLPLQTTTISSKETLNSSSSAHSIESSQTPETEIRSRWDRWGLSRGKRDRTPSNSRAPATPKEDFPPVFHIALKDHVLLEGNPVTLSCLPAGSPEPKILWLKDKKPLKLCDGMNLEACPDGRQLLMIMNISKKDAGIYECVATNNLASVTTSCILTLACIPNCPGTPEIRQIYNNTVLVQWKPSDTKVPCTYTIEKKFDGDDKWLTEATGVTDCFFNSSELPSGSTIRFRVACVNKAGQSPYSNESDGVSIDTKVTPQHQPAKMKTHSPASFPAMTAAVATSAFSLSLPSVFSQSISPTPAQSADVSNTFLEVQSSPKMSTPLDLPKPASSVNTMPPITQTQTVSPRSYTAPPSIGRSISPVPTYVPATCSLAPTPVSPSVIVVSSISPIGEGASSPTPETPTGQAVSSTKSETTLRQGVPQKPYSFLDEKARGRFGVIRDCRENATGKMFIAKIIPYDQQTKQTIIKEYEILKSLRCERIMALHEAYITPRYLVLITEYCSGKEILQNLIDRFCYSEDDVVGFIVQILQGLEYLHNCKILHLDIKPDNIMVTNLNVIKIIDFGSAQRFNPLSLQQCSRYLGTLEYMAPEMLKGDLVGPPADIWSLGVLSYIMLSGRHPFEDKDPQLTEAKIHEAKFDSTKLYPKVSQSASTFLKKILNSYPWCRPTIKDCLNHSWLHDSYLKKLRRQTLTFTTTRLKEFMGEHQRRCAESATKHKVILRVYQGGPSSPASPTKYTTQ</sequence>
<comment type="catalytic activity">
    <reaction>
        <text>L-seryl-[protein] + ATP = O-phospho-L-seryl-[protein] + ADP + H(+)</text>
        <dbReference type="Rhea" id="RHEA:17989"/>
        <dbReference type="Rhea" id="RHEA-COMP:9863"/>
        <dbReference type="Rhea" id="RHEA-COMP:11604"/>
        <dbReference type="ChEBI" id="CHEBI:15378"/>
        <dbReference type="ChEBI" id="CHEBI:29999"/>
        <dbReference type="ChEBI" id="CHEBI:30616"/>
        <dbReference type="ChEBI" id="CHEBI:83421"/>
        <dbReference type="ChEBI" id="CHEBI:456216"/>
        <dbReference type="EC" id="2.7.11.1"/>
    </reaction>
</comment>
<comment type="catalytic activity">
    <reaction>
        <text>L-threonyl-[protein] + ATP = O-phospho-L-threonyl-[protein] + ADP + H(+)</text>
        <dbReference type="Rhea" id="RHEA:46608"/>
        <dbReference type="Rhea" id="RHEA-COMP:11060"/>
        <dbReference type="Rhea" id="RHEA-COMP:11605"/>
        <dbReference type="ChEBI" id="CHEBI:15378"/>
        <dbReference type="ChEBI" id="CHEBI:30013"/>
        <dbReference type="ChEBI" id="CHEBI:30616"/>
        <dbReference type="ChEBI" id="CHEBI:61977"/>
        <dbReference type="ChEBI" id="CHEBI:456216"/>
        <dbReference type="EC" id="2.7.11.1"/>
    </reaction>
</comment>
<comment type="subcellular location">
    <subcellularLocation>
        <location evidence="1">Nucleus</location>
    </subcellularLocation>
</comment>
<comment type="tissue specificity">
    <text evidence="6">Preferentially expressed in striated muscle.</text>
</comment>
<comment type="PTM">
    <text evidence="1">May be autophosphorylated.</text>
</comment>
<comment type="similarity">
    <text evidence="7">Belongs to the protein kinase superfamily. CAMK Ser/Thr protein kinase family.</text>
</comment>
<keyword id="KW-0067">ATP-binding</keyword>
<keyword id="KW-1015">Disulfide bond</keyword>
<keyword id="KW-0393">Immunoglobulin domain</keyword>
<keyword id="KW-0418">Kinase</keyword>
<keyword id="KW-0547">Nucleotide-binding</keyword>
<keyword id="KW-0539">Nucleus</keyword>
<keyword id="KW-0597">Phosphoprotein</keyword>
<keyword id="KW-1185">Reference proteome</keyword>
<keyword id="KW-0677">Repeat</keyword>
<keyword id="KW-0723">Serine/threonine-protein kinase</keyword>
<keyword id="KW-0808">Transferase</keyword>
<reference key="1">
    <citation type="journal article" date="2004" name="Dev. Genes Evol.">
        <title>Orthologous relationship of obscurin and Unc-89: phylogeny of a novel family of tandem myosin light chain kinases.</title>
        <authorList>
            <person name="Sutter S.B."/>
            <person name="Raeker M.O."/>
            <person name="Borisov A.B."/>
            <person name="Russell M.W."/>
        </authorList>
    </citation>
    <scope>NUCLEOTIDE SEQUENCE [MRNA]</scope>
    <scope>TISSUE SPECIFICITY</scope>
</reference>
<evidence type="ECO:0000250" key="1"/>
<evidence type="ECO:0000255" key="2">
    <source>
        <dbReference type="PROSITE-ProRule" id="PRU00114"/>
    </source>
</evidence>
<evidence type="ECO:0000255" key="3">
    <source>
        <dbReference type="PROSITE-ProRule" id="PRU00159"/>
    </source>
</evidence>
<evidence type="ECO:0000255" key="4">
    <source>
        <dbReference type="PROSITE-ProRule" id="PRU00316"/>
    </source>
</evidence>
<evidence type="ECO:0000256" key="5">
    <source>
        <dbReference type="SAM" id="MobiDB-lite"/>
    </source>
</evidence>
<evidence type="ECO:0000269" key="6">
    <source>
    </source>
</evidence>
<evidence type="ECO:0000305" key="7"/>
<proteinExistence type="evidence at transcript level"/>
<organism>
    <name type="scientific">Danio rerio</name>
    <name type="common">Zebrafish</name>
    <name type="synonym">Brachydanio rerio</name>
    <dbReference type="NCBI Taxonomy" id="7955"/>
    <lineage>
        <taxon>Eukaryota</taxon>
        <taxon>Metazoa</taxon>
        <taxon>Chordata</taxon>
        <taxon>Craniata</taxon>
        <taxon>Vertebrata</taxon>
        <taxon>Euteleostomi</taxon>
        <taxon>Actinopterygii</taxon>
        <taxon>Neopterygii</taxon>
        <taxon>Teleostei</taxon>
        <taxon>Ostariophysi</taxon>
        <taxon>Cypriniformes</taxon>
        <taxon>Danionidae</taxon>
        <taxon>Danioninae</taxon>
        <taxon>Danio</taxon>
    </lineage>
</organism>